<sequence length="224" mass="24343">MGQKGCPVGFRTAVTKKWRSLWYGNNQEFGKFLIEDVKIREFLKKKPSCQGAAGFVVKRMSGKIEVTIHTARPGLVIGKKGAEVESLKAELKKLTGKDVWVEIAEVKRPELNAQLVADGIAKQIERRVSFRRAMKKALQSVMDAGALGVKVQVSGRLAGAEIARSEWYKNGRVPLHTLRADIDYATASAETTYGIIGIKVWINLGEKKAVPAANHAGAASTAAA</sequence>
<accession>B0BCG1</accession>
<name>RS3_CHLTB</name>
<dbReference type="EMBL" id="AM884177">
    <property type="protein sequence ID" value="CAP07176.1"/>
    <property type="molecule type" value="Genomic_DNA"/>
</dbReference>
<dbReference type="RefSeq" id="WP_009873873.1">
    <property type="nucleotide sequence ID" value="NC_010280.2"/>
</dbReference>
<dbReference type="SMR" id="B0BCG1"/>
<dbReference type="KEGG" id="ctl:CTLon_0779"/>
<dbReference type="HOGENOM" id="CLU_058591_0_2_0"/>
<dbReference type="Proteomes" id="UP001154401">
    <property type="component" value="Chromosome"/>
</dbReference>
<dbReference type="GO" id="GO:0022627">
    <property type="term" value="C:cytosolic small ribosomal subunit"/>
    <property type="evidence" value="ECO:0007669"/>
    <property type="project" value="TreeGrafter"/>
</dbReference>
<dbReference type="GO" id="GO:0003729">
    <property type="term" value="F:mRNA binding"/>
    <property type="evidence" value="ECO:0007669"/>
    <property type="project" value="UniProtKB-UniRule"/>
</dbReference>
<dbReference type="GO" id="GO:0019843">
    <property type="term" value="F:rRNA binding"/>
    <property type="evidence" value="ECO:0007669"/>
    <property type="project" value="UniProtKB-UniRule"/>
</dbReference>
<dbReference type="GO" id="GO:0003735">
    <property type="term" value="F:structural constituent of ribosome"/>
    <property type="evidence" value="ECO:0007669"/>
    <property type="project" value="InterPro"/>
</dbReference>
<dbReference type="GO" id="GO:0006412">
    <property type="term" value="P:translation"/>
    <property type="evidence" value="ECO:0007669"/>
    <property type="project" value="UniProtKB-UniRule"/>
</dbReference>
<dbReference type="CDD" id="cd02412">
    <property type="entry name" value="KH-II_30S_S3"/>
    <property type="match status" value="1"/>
</dbReference>
<dbReference type="FunFam" id="3.30.300.20:FF:000001">
    <property type="entry name" value="30S ribosomal protein S3"/>
    <property type="match status" value="1"/>
</dbReference>
<dbReference type="Gene3D" id="3.30.300.20">
    <property type="match status" value="1"/>
</dbReference>
<dbReference type="Gene3D" id="3.30.1140.32">
    <property type="entry name" value="Ribosomal protein S3, C-terminal domain"/>
    <property type="match status" value="1"/>
</dbReference>
<dbReference type="HAMAP" id="MF_01309_B">
    <property type="entry name" value="Ribosomal_uS3_B"/>
    <property type="match status" value="1"/>
</dbReference>
<dbReference type="InterPro" id="IPR004087">
    <property type="entry name" value="KH_dom"/>
</dbReference>
<dbReference type="InterPro" id="IPR015946">
    <property type="entry name" value="KH_dom-like_a/b"/>
</dbReference>
<dbReference type="InterPro" id="IPR004044">
    <property type="entry name" value="KH_dom_type_2"/>
</dbReference>
<dbReference type="InterPro" id="IPR009019">
    <property type="entry name" value="KH_sf_prok-type"/>
</dbReference>
<dbReference type="InterPro" id="IPR036419">
    <property type="entry name" value="Ribosomal_S3_C_sf"/>
</dbReference>
<dbReference type="InterPro" id="IPR005704">
    <property type="entry name" value="Ribosomal_uS3_bac-typ"/>
</dbReference>
<dbReference type="InterPro" id="IPR001351">
    <property type="entry name" value="Ribosomal_uS3_C"/>
</dbReference>
<dbReference type="InterPro" id="IPR018280">
    <property type="entry name" value="Ribosomal_uS3_CS"/>
</dbReference>
<dbReference type="NCBIfam" id="TIGR01009">
    <property type="entry name" value="rpsC_bact"/>
    <property type="match status" value="1"/>
</dbReference>
<dbReference type="PANTHER" id="PTHR11760">
    <property type="entry name" value="30S/40S RIBOSOMAL PROTEIN S3"/>
    <property type="match status" value="1"/>
</dbReference>
<dbReference type="PANTHER" id="PTHR11760:SF19">
    <property type="entry name" value="SMALL RIBOSOMAL SUBUNIT PROTEIN US3C"/>
    <property type="match status" value="1"/>
</dbReference>
<dbReference type="Pfam" id="PF07650">
    <property type="entry name" value="KH_2"/>
    <property type="match status" value="1"/>
</dbReference>
<dbReference type="Pfam" id="PF00189">
    <property type="entry name" value="Ribosomal_S3_C"/>
    <property type="match status" value="1"/>
</dbReference>
<dbReference type="SMART" id="SM00322">
    <property type="entry name" value="KH"/>
    <property type="match status" value="1"/>
</dbReference>
<dbReference type="SUPFAM" id="SSF54814">
    <property type="entry name" value="Prokaryotic type KH domain (KH-domain type II)"/>
    <property type="match status" value="1"/>
</dbReference>
<dbReference type="SUPFAM" id="SSF54821">
    <property type="entry name" value="Ribosomal protein S3 C-terminal domain"/>
    <property type="match status" value="1"/>
</dbReference>
<dbReference type="PROSITE" id="PS50823">
    <property type="entry name" value="KH_TYPE_2"/>
    <property type="match status" value="1"/>
</dbReference>
<dbReference type="PROSITE" id="PS00548">
    <property type="entry name" value="RIBOSOMAL_S3"/>
    <property type="match status" value="1"/>
</dbReference>
<organism>
    <name type="scientific">Chlamydia trachomatis serovar L2b (strain UCH-1/proctitis)</name>
    <dbReference type="NCBI Taxonomy" id="471473"/>
    <lineage>
        <taxon>Bacteria</taxon>
        <taxon>Pseudomonadati</taxon>
        <taxon>Chlamydiota</taxon>
        <taxon>Chlamydiia</taxon>
        <taxon>Chlamydiales</taxon>
        <taxon>Chlamydiaceae</taxon>
        <taxon>Chlamydia/Chlamydophila group</taxon>
        <taxon>Chlamydia</taxon>
    </lineage>
</organism>
<feature type="chain" id="PRO_1000140940" description="Small ribosomal subunit protein uS3">
    <location>
        <begin position="1"/>
        <end position="224"/>
    </location>
</feature>
<feature type="domain" description="KH type-2" evidence="1">
    <location>
        <begin position="39"/>
        <end position="107"/>
    </location>
</feature>
<evidence type="ECO:0000255" key="1">
    <source>
        <dbReference type="HAMAP-Rule" id="MF_01309"/>
    </source>
</evidence>
<evidence type="ECO:0000305" key="2"/>
<protein>
    <recommendedName>
        <fullName evidence="1">Small ribosomal subunit protein uS3</fullName>
    </recommendedName>
    <alternativeName>
        <fullName evidence="2">30S ribosomal protein S3</fullName>
    </alternativeName>
</protein>
<gene>
    <name evidence="1" type="primary">rpsC</name>
    <name type="ordered locus">CTLon_0779</name>
</gene>
<proteinExistence type="inferred from homology"/>
<reference key="1">
    <citation type="journal article" date="2008" name="Genome Res.">
        <title>Chlamydia trachomatis: genome sequence analysis of lymphogranuloma venereum isolates.</title>
        <authorList>
            <person name="Thomson N.R."/>
            <person name="Holden M.T.G."/>
            <person name="Carder C."/>
            <person name="Lennard N."/>
            <person name="Lockey S.J."/>
            <person name="Marsh P."/>
            <person name="Skipp P."/>
            <person name="O'Connor C.D."/>
            <person name="Goodhead I."/>
            <person name="Norbertzcak H."/>
            <person name="Harris B."/>
            <person name="Ormond D."/>
            <person name="Rance R."/>
            <person name="Quail M.A."/>
            <person name="Parkhill J."/>
            <person name="Stephens R.S."/>
            <person name="Clarke I.N."/>
        </authorList>
    </citation>
    <scope>NUCLEOTIDE SEQUENCE [LARGE SCALE GENOMIC DNA]</scope>
    <source>
        <strain>UCH-1/proctitis</strain>
    </source>
</reference>
<comment type="function">
    <text evidence="1">Binds the lower part of the 30S subunit head. Binds mRNA in the 70S ribosome, positioning it for translation.</text>
</comment>
<comment type="subunit">
    <text evidence="1">Part of the 30S ribosomal subunit. Forms a tight complex with proteins S10 and S14.</text>
</comment>
<comment type="similarity">
    <text evidence="1">Belongs to the universal ribosomal protein uS3 family.</text>
</comment>
<keyword id="KW-0687">Ribonucleoprotein</keyword>
<keyword id="KW-0689">Ribosomal protein</keyword>
<keyword id="KW-0694">RNA-binding</keyword>
<keyword id="KW-0699">rRNA-binding</keyword>